<feature type="signal peptide" evidence="1">
    <location>
        <begin position="1"/>
        <end position="23"/>
    </location>
</feature>
<feature type="propeptide" id="PRO_0000461239" evidence="4">
    <location>
        <begin position="24"/>
        <end position="53"/>
    </location>
</feature>
<feature type="peptide" id="PRO_0000461240" description="Myrmicitoxin(1)-Pm4a" evidence="2">
    <location>
        <begin position="54"/>
        <end position="70"/>
    </location>
</feature>
<feature type="modified residue" description="Serine amide" evidence="2">
    <location>
        <position position="70"/>
    </location>
</feature>
<sequence length="71" mass="7180">MEIPKFLFITVIAIGLSGSLTWANPLANPEAEATAEAGPEAEAVAEAVGEAEPLLPLIPILASLIAAIKSG</sequence>
<reference key="1">
    <citation type="journal article" date="2024" name="J. Biol. Chem.">
        <title>Peptide toxins that target vertebrate voltage-gated sodium channels underly the painful stings of harvester ants.</title>
        <authorList>
            <person name="Robinson S.D."/>
            <person name="Deuis J.R."/>
            <person name="Niu P."/>
            <person name="Touchard A."/>
            <person name="Mueller A."/>
            <person name="Schendel V."/>
            <person name="Brinkwirth N."/>
            <person name="King G.F."/>
            <person name="Vetter I."/>
            <person name="Schmidt J.O."/>
        </authorList>
    </citation>
    <scope>NUCLEOTIDE SEQUENCE [MRNA]</scope>
    <scope>IDENTIFICATION BY MASS SPECTROMETRY</scope>
    <scope>SUBCELLULAR LOCATION</scope>
    <scope>SYNTHESIS OF 54-70</scope>
    <scope>BIOASSAY</scope>
    <scope>TOXIC DOSE</scope>
    <scope>AMIDATION AT SER-70</scope>
    <source>
        <tissue>Venom</tissue>
        <tissue>Venom gland</tissue>
    </source>
</reference>
<protein>
    <recommendedName>
        <fullName evidence="3">Myrmicitoxin(1)-Pm4a</fullName>
        <shortName evidence="3">MYRTX(1)-Pm4a</shortName>
    </recommendedName>
</protein>
<accession>P0DRD3</accession>
<dbReference type="EMBL" id="OR128462">
    <property type="protein sequence ID" value="WMI02500.1"/>
    <property type="molecule type" value="mRNA"/>
</dbReference>
<dbReference type="GO" id="GO:0005576">
    <property type="term" value="C:extracellular region"/>
    <property type="evidence" value="ECO:0007669"/>
    <property type="project" value="UniProtKB-SubCell"/>
</dbReference>
<dbReference type="GO" id="GO:0017080">
    <property type="term" value="F:sodium channel regulator activity"/>
    <property type="evidence" value="ECO:0007669"/>
    <property type="project" value="UniProtKB-KW"/>
</dbReference>
<dbReference type="GO" id="GO:0090729">
    <property type="term" value="F:toxin activity"/>
    <property type="evidence" value="ECO:0007669"/>
    <property type="project" value="UniProtKB-KW"/>
</dbReference>
<keyword id="KW-0027">Amidation</keyword>
<keyword id="KW-0872">Ion channel impairing toxin</keyword>
<keyword id="KW-0528">Neurotoxin</keyword>
<keyword id="KW-0964">Secreted</keyword>
<keyword id="KW-0732">Signal</keyword>
<keyword id="KW-0800">Toxin</keyword>
<keyword id="KW-0738">Voltage-gated sodium channel impairing toxin</keyword>
<evidence type="ECO:0000255" key="1"/>
<evidence type="ECO:0000269" key="2">
    <source>
    </source>
</evidence>
<evidence type="ECO:0000303" key="3">
    <source>
    </source>
</evidence>
<evidence type="ECO:0000305" key="4"/>
<evidence type="ECO:0000305" key="5">
    <source>
    </source>
</evidence>
<proteinExistence type="evidence at protein level"/>
<organism>
    <name type="scientific">Pogonomyrmex maricopa</name>
    <name type="common">Maricopa harvester ant</name>
    <dbReference type="NCBI Taxonomy" id="144040"/>
    <lineage>
        <taxon>Eukaryota</taxon>
        <taxon>Metazoa</taxon>
        <taxon>Ecdysozoa</taxon>
        <taxon>Arthropoda</taxon>
        <taxon>Hexapoda</taxon>
        <taxon>Insecta</taxon>
        <taxon>Pterygota</taxon>
        <taxon>Neoptera</taxon>
        <taxon>Endopterygota</taxon>
        <taxon>Hymenoptera</taxon>
        <taxon>Apocrita</taxon>
        <taxon>Aculeata</taxon>
        <taxon>Formicoidea</taxon>
        <taxon>Formicidae</taxon>
        <taxon>Myrmicinae</taxon>
        <taxon>Pogonomyrmex</taxon>
    </lineage>
</organism>
<comment type="function">
    <text evidence="2">Toxin that causes a rapid paralysis when intrathoracically injected into insects (blowflies). Does not cause spontaneous nocifensive behaviors by intraplantar injection in mice.</text>
</comment>
<comment type="subcellular location">
    <subcellularLocation>
        <location evidence="2">Secreted</location>
    </subcellularLocation>
</comment>
<comment type="tissue specificity">
    <text evidence="5">Expressed by the venom gland.</text>
</comment>
<comment type="toxic dose">
    <text evidence="2">PD(50) [1 hour] is 57.0 nmol/g when intrathoracically injected into insects (blowfly L.caesar).</text>
</comment>
<comment type="miscellaneous">
    <text evidence="2">Negative results: does not exhibit hemolytic and cytotoxic activities on HEK293 cells.</text>
</comment>
<comment type="similarity">
    <text evidence="4">Belongs to the formicidae venom clade 1 family.</text>
</comment>
<name>TX4A_POGMA</name>